<name>ATP6_SHESR</name>
<accession>Q0HPF5</accession>
<proteinExistence type="inferred from homology"/>
<comment type="function">
    <text evidence="1">Key component of the proton channel; it plays a direct role in the translocation of protons across the membrane.</text>
</comment>
<comment type="subunit">
    <text evidence="1">F-type ATPases have 2 components, CF(1) - the catalytic core - and CF(0) - the membrane proton channel. CF(1) has five subunits: alpha(3), beta(3), gamma(1), delta(1), epsilon(1). CF(0) has three main subunits: a(1), b(2) and c(9-12). The alpha and beta chains form an alternating ring which encloses part of the gamma chain. CF(1) is attached to CF(0) by a central stalk formed by the gamma and epsilon chains, while a peripheral stalk is formed by the delta and b chains.</text>
</comment>
<comment type="subcellular location">
    <subcellularLocation>
        <location evidence="1">Cell inner membrane</location>
        <topology evidence="1">Multi-pass membrane protein</topology>
    </subcellularLocation>
</comment>
<comment type="similarity">
    <text evidence="1">Belongs to the ATPase A chain family.</text>
</comment>
<feature type="chain" id="PRO_0000362461" description="ATP synthase subunit a">
    <location>
        <begin position="1"/>
        <end position="264"/>
    </location>
</feature>
<feature type="transmembrane region" description="Helical" evidence="1">
    <location>
        <begin position="29"/>
        <end position="49"/>
    </location>
</feature>
<feature type="transmembrane region" description="Helical" evidence="1">
    <location>
        <begin position="87"/>
        <end position="107"/>
    </location>
</feature>
<feature type="transmembrane region" description="Helical" evidence="1">
    <location>
        <begin position="134"/>
        <end position="154"/>
    </location>
</feature>
<feature type="transmembrane region" description="Helical" evidence="1">
    <location>
        <begin position="177"/>
        <end position="197"/>
    </location>
</feature>
<feature type="transmembrane region" description="Helical" evidence="1">
    <location>
        <begin position="208"/>
        <end position="228"/>
    </location>
</feature>
<feature type="transmembrane region" description="Helical" evidence="1">
    <location>
        <begin position="235"/>
        <end position="255"/>
    </location>
</feature>
<evidence type="ECO:0000255" key="1">
    <source>
        <dbReference type="HAMAP-Rule" id="MF_01393"/>
    </source>
</evidence>
<dbReference type="EMBL" id="CP000444">
    <property type="protein sequence ID" value="ABI45000.1"/>
    <property type="molecule type" value="Genomic_DNA"/>
</dbReference>
<dbReference type="SMR" id="Q0HPF5"/>
<dbReference type="KEGG" id="shm:Shewmr7_4023"/>
<dbReference type="HOGENOM" id="CLU_041018_1_0_6"/>
<dbReference type="GO" id="GO:0005886">
    <property type="term" value="C:plasma membrane"/>
    <property type="evidence" value="ECO:0007669"/>
    <property type="project" value="UniProtKB-SubCell"/>
</dbReference>
<dbReference type="GO" id="GO:0045259">
    <property type="term" value="C:proton-transporting ATP synthase complex"/>
    <property type="evidence" value="ECO:0007669"/>
    <property type="project" value="UniProtKB-KW"/>
</dbReference>
<dbReference type="GO" id="GO:0046933">
    <property type="term" value="F:proton-transporting ATP synthase activity, rotational mechanism"/>
    <property type="evidence" value="ECO:0007669"/>
    <property type="project" value="UniProtKB-UniRule"/>
</dbReference>
<dbReference type="GO" id="GO:0042777">
    <property type="term" value="P:proton motive force-driven plasma membrane ATP synthesis"/>
    <property type="evidence" value="ECO:0007669"/>
    <property type="project" value="TreeGrafter"/>
</dbReference>
<dbReference type="CDD" id="cd00310">
    <property type="entry name" value="ATP-synt_Fo_a_6"/>
    <property type="match status" value="1"/>
</dbReference>
<dbReference type="FunFam" id="1.20.120.220:FF:000002">
    <property type="entry name" value="ATP synthase subunit a"/>
    <property type="match status" value="1"/>
</dbReference>
<dbReference type="Gene3D" id="1.20.120.220">
    <property type="entry name" value="ATP synthase, F0 complex, subunit A"/>
    <property type="match status" value="1"/>
</dbReference>
<dbReference type="HAMAP" id="MF_01393">
    <property type="entry name" value="ATP_synth_a_bact"/>
    <property type="match status" value="1"/>
</dbReference>
<dbReference type="InterPro" id="IPR045082">
    <property type="entry name" value="ATP_syn_F0_a_bact/chloroplast"/>
</dbReference>
<dbReference type="InterPro" id="IPR000568">
    <property type="entry name" value="ATP_synth_F0_asu"/>
</dbReference>
<dbReference type="InterPro" id="IPR023011">
    <property type="entry name" value="ATP_synth_F0_asu_AS"/>
</dbReference>
<dbReference type="InterPro" id="IPR035908">
    <property type="entry name" value="F0_ATP_A_sf"/>
</dbReference>
<dbReference type="NCBIfam" id="TIGR01131">
    <property type="entry name" value="ATP_synt_6_or_A"/>
    <property type="match status" value="1"/>
</dbReference>
<dbReference type="NCBIfam" id="NF004477">
    <property type="entry name" value="PRK05815.1-1"/>
    <property type="match status" value="1"/>
</dbReference>
<dbReference type="PANTHER" id="PTHR42823">
    <property type="entry name" value="ATP SYNTHASE SUBUNIT A, CHLOROPLASTIC"/>
    <property type="match status" value="1"/>
</dbReference>
<dbReference type="PANTHER" id="PTHR42823:SF3">
    <property type="entry name" value="ATP SYNTHASE SUBUNIT A, CHLOROPLASTIC"/>
    <property type="match status" value="1"/>
</dbReference>
<dbReference type="Pfam" id="PF00119">
    <property type="entry name" value="ATP-synt_A"/>
    <property type="match status" value="1"/>
</dbReference>
<dbReference type="PRINTS" id="PR00123">
    <property type="entry name" value="ATPASEA"/>
</dbReference>
<dbReference type="SUPFAM" id="SSF81336">
    <property type="entry name" value="F1F0 ATP synthase subunit A"/>
    <property type="match status" value="1"/>
</dbReference>
<dbReference type="PROSITE" id="PS00449">
    <property type="entry name" value="ATPASE_A"/>
    <property type="match status" value="1"/>
</dbReference>
<organism>
    <name type="scientific">Shewanella sp. (strain MR-7)</name>
    <dbReference type="NCBI Taxonomy" id="60481"/>
    <lineage>
        <taxon>Bacteria</taxon>
        <taxon>Pseudomonadati</taxon>
        <taxon>Pseudomonadota</taxon>
        <taxon>Gammaproteobacteria</taxon>
        <taxon>Alteromonadales</taxon>
        <taxon>Shewanellaceae</taxon>
        <taxon>Shewanella</taxon>
    </lineage>
</organism>
<reference key="1">
    <citation type="submission" date="2006-08" db="EMBL/GenBank/DDBJ databases">
        <title>Complete sequence of chromosome 1 of Shewanella sp. MR-7.</title>
        <authorList>
            <person name="Copeland A."/>
            <person name="Lucas S."/>
            <person name="Lapidus A."/>
            <person name="Barry K."/>
            <person name="Detter J.C."/>
            <person name="Glavina del Rio T."/>
            <person name="Hammon N."/>
            <person name="Israni S."/>
            <person name="Dalin E."/>
            <person name="Tice H."/>
            <person name="Pitluck S."/>
            <person name="Kiss H."/>
            <person name="Brettin T."/>
            <person name="Bruce D."/>
            <person name="Han C."/>
            <person name="Tapia R."/>
            <person name="Gilna P."/>
            <person name="Schmutz J."/>
            <person name="Larimer F."/>
            <person name="Land M."/>
            <person name="Hauser L."/>
            <person name="Kyrpides N."/>
            <person name="Mikhailova N."/>
            <person name="Nealson K."/>
            <person name="Konstantinidis K."/>
            <person name="Klappenbach J."/>
            <person name="Tiedje J."/>
            <person name="Richardson P."/>
        </authorList>
    </citation>
    <scope>NUCLEOTIDE SEQUENCE [LARGE SCALE GENOMIC DNA]</scope>
    <source>
        <strain>MR-7</strain>
    </source>
</reference>
<sequence length="264" mass="29520">MAATGEALTPQGYIQHHLTNLHVGEGFWTWHIDSLFFSVGLGVLFLWIFRSVGKKATSGVPGKLQCFIEMIVEFVDNSVKESFHGRNALIAPLALTIFVWVFMMNFMDMLPVDWLPWLASLAGVPYLKVVPTTDVNITFSLAIGVFVLIIYYSIKVKGVSGFVKELTLQPFNHKAMIPVNLLLETVTLIAKPISLALRLFGNLYAGELIFILIALMYGTNLLLSSLGVTLQLGWLIFHILVITLQAFIFMMLTIVYLSMAHEDH</sequence>
<keyword id="KW-0066">ATP synthesis</keyword>
<keyword id="KW-0997">Cell inner membrane</keyword>
<keyword id="KW-1003">Cell membrane</keyword>
<keyword id="KW-0138">CF(0)</keyword>
<keyword id="KW-0375">Hydrogen ion transport</keyword>
<keyword id="KW-0406">Ion transport</keyword>
<keyword id="KW-0472">Membrane</keyword>
<keyword id="KW-0812">Transmembrane</keyword>
<keyword id="KW-1133">Transmembrane helix</keyword>
<keyword id="KW-0813">Transport</keyword>
<gene>
    <name evidence="1" type="primary">atpB</name>
    <name type="ordered locus">Shewmr7_4023</name>
</gene>
<protein>
    <recommendedName>
        <fullName evidence="1">ATP synthase subunit a</fullName>
    </recommendedName>
    <alternativeName>
        <fullName evidence="1">ATP synthase F0 sector subunit a</fullName>
    </alternativeName>
    <alternativeName>
        <fullName evidence="1">F-ATPase subunit 6</fullName>
    </alternativeName>
</protein>